<dbReference type="EMBL" id="CP001396">
    <property type="protein sequence ID" value="ACR64113.1"/>
    <property type="molecule type" value="Genomic_DNA"/>
</dbReference>
<dbReference type="RefSeq" id="WP_000122871.1">
    <property type="nucleotide sequence ID" value="NC_012759.1"/>
</dbReference>
<dbReference type="SMR" id="C4ZPW1"/>
<dbReference type="KEGG" id="ebw:BWG_0033"/>
<dbReference type="HOGENOM" id="CLU_064827_4_2_6"/>
<dbReference type="UniPathway" id="UPA00117"/>
<dbReference type="GO" id="GO:0016740">
    <property type="term" value="F:transferase activity"/>
    <property type="evidence" value="ECO:0007669"/>
    <property type="project" value="UniProtKB-KW"/>
</dbReference>
<dbReference type="GO" id="GO:0009437">
    <property type="term" value="P:carnitine metabolic process"/>
    <property type="evidence" value="ECO:0007669"/>
    <property type="project" value="UniProtKB-UniRule"/>
</dbReference>
<dbReference type="CDD" id="cd04745">
    <property type="entry name" value="LbH_paaY_like"/>
    <property type="match status" value="1"/>
</dbReference>
<dbReference type="FunFam" id="2.160.10.10:FF:000012">
    <property type="entry name" value="Carnitine operon protein CaiE"/>
    <property type="match status" value="1"/>
</dbReference>
<dbReference type="Gene3D" id="2.160.10.10">
    <property type="entry name" value="Hexapeptide repeat proteins"/>
    <property type="match status" value="1"/>
</dbReference>
<dbReference type="HAMAP" id="MF_01525">
    <property type="entry name" value="CaiE"/>
    <property type="match status" value="1"/>
</dbReference>
<dbReference type="InterPro" id="IPR023446">
    <property type="entry name" value="CaiE"/>
</dbReference>
<dbReference type="InterPro" id="IPR001451">
    <property type="entry name" value="Hexapep"/>
</dbReference>
<dbReference type="InterPro" id="IPR050484">
    <property type="entry name" value="Transf_Hexapept/Carb_Anhydrase"/>
</dbReference>
<dbReference type="InterPro" id="IPR011004">
    <property type="entry name" value="Trimer_LpxA-like_sf"/>
</dbReference>
<dbReference type="NCBIfam" id="NF010150">
    <property type="entry name" value="PRK13627.1"/>
    <property type="match status" value="1"/>
</dbReference>
<dbReference type="PANTHER" id="PTHR13061">
    <property type="entry name" value="DYNACTIN SUBUNIT P25"/>
    <property type="match status" value="1"/>
</dbReference>
<dbReference type="PANTHER" id="PTHR13061:SF29">
    <property type="entry name" value="GAMMA CARBONIC ANHYDRASE-LIKE 1, MITOCHONDRIAL-RELATED"/>
    <property type="match status" value="1"/>
</dbReference>
<dbReference type="Pfam" id="PF00132">
    <property type="entry name" value="Hexapep"/>
    <property type="match status" value="1"/>
</dbReference>
<dbReference type="SUPFAM" id="SSF51161">
    <property type="entry name" value="Trimeric LpxA-like enzymes"/>
    <property type="match status" value="1"/>
</dbReference>
<sequence>MSYYAFEGLIPVVHPTAFVHPSAVLIGDVIVGAGVYIGPLASLRGDYGRLIVQAGANIQDGCIMHGYCDTDTIVGENGHIGHGAILHGCLIGRDALVGMNSVIMDGAVIGEESIVAAMSFVKAGFRGEKRQLLMGTPARAVRNVSDDELHWKRLNTKEYQDLVGRCHVSLHETQPLRQMEENRPRLQGTTDVTPKR</sequence>
<proteinExistence type="inferred from homology"/>
<feature type="chain" id="PRO_1000215381" description="Carnitine operon protein CaiE">
    <location>
        <begin position="1"/>
        <end position="196"/>
    </location>
</feature>
<feature type="region of interest" description="Disordered" evidence="2">
    <location>
        <begin position="174"/>
        <end position="196"/>
    </location>
</feature>
<feature type="compositionally biased region" description="Polar residues" evidence="2">
    <location>
        <begin position="187"/>
        <end position="196"/>
    </location>
</feature>
<organism>
    <name type="scientific">Escherichia coli (strain K12 / MC4100 / BW2952)</name>
    <dbReference type="NCBI Taxonomy" id="595496"/>
    <lineage>
        <taxon>Bacteria</taxon>
        <taxon>Pseudomonadati</taxon>
        <taxon>Pseudomonadota</taxon>
        <taxon>Gammaproteobacteria</taxon>
        <taxon>Enterobacterales</taxon>
        <taxon>Enterobacteriaceae</taxon>
        <taxon>Escherichia</taxon>
    </lineage>
</organism>
<protein>
    <recommendedName>
        <fullName evidence="1">Carnitine operon protein CaiE</fullName>
    </recommendedName>
</protein>
<evidence type="ECO:0000255" key="1">
    <source>
        <dbReference type="HAMAP-Rule" id="MF_01525"/>
    </source>
</evidence>
<evidence type="ECO:0000256" key="2">
    <source>
        <dbReference type="SAM" id="MobiDB-lite"/>
    </source>
</evidence>
<comment type="function">
    <text evidence="1">Overproduction of CaiE stimulates the activity of CaiB and CaiD.</text>
</comment>
<comment type="pathway">
    <text evidence="1">Amine and polyamine metabolism; carnitine metabolism.</text>
</comment>
<comment type="similarity">
    <text evidence="1">Belongs to the transferase hexapeptide repeat family.</text>
</comment>
<accession>C4ZPW1</accession>
<gene>
    <name evidence="1" type="primary">caiE</name>
    <name type="ordered locus">BWG_0033</name>
</gene>
<name>CAIE_ECOBW</name>
<reference key="1">
    <citation type="journal article" date="2009" name="J. Bacteriol.">
        <title>Genomic sequencing reveals regulatory mutations and recombinational events in the widely used MC4100 lineage of Escherichia coli K-12.</title>
        <authorList>
            <person name="Ferenci T."/>
            <person name="Zhou Z."/>
            <person name="Betteridge T."/>
            <person name="Ren Y."/>
            <person name="Liu Y."/>
            <person name="Feng L."/>
            <person name="Reeves P.R."/>
            <person name="Wang L."/>
        </authorList>
    </citation>
    <scope>NUCLEOTIDE SEQUENCE [LARGE SCALE GENOMIC DNA]</scope>
    <source>
        <strain>K12 / MC4100 / BW2952</strain>
    </source>
</reference>
<keyword id="KW-0677">Repeat</keyword>
<keyword id="KW-0808">Transferase</keyword>